<name>MAP1B_ARATH</name>
<accession>Q9FV52</accession>
<accession>Q9FX70</accession>
<proteinExistence type="evidence at transcript level"/>
<organism>
    <name type="scientific">Arabidopsis thaliana</name>
    <name type="common">Mouse-ear cress</name>
    <dbReference type="NCBI Taxonomy" id="3702"/>
    <lineage>
        <taxon>Eukaryota</taxon>
        <taxon>Viridiplantae</taxon>
        <taxon>Streptophyta</taxon>
        <taxon>Embryophyta</taxon>
        <taxon>Tracheophyta</taxon>
        <taxon>Spermatophyta</taxon>
        <taxon>Magnoliopsida</taxon>
        <taxon>eudicotyledons</taxon>
        <taxon>Gunneridae</taxon>
        <taxon>Pentapetalae</taxon>
        <taxon>rosids</taxon>
        <taxon>malvids</taxon>
        <taxon>Brassicales</taxon>
        <taxon>Brassicaceae</taxon>
        <taxon>Camelineae</taxon>
        <taxon>Arabidopsis</taxon>
    </lineage>
</organism>
<reference key="1">
    <citation type="journal article" date="2000" name="EMBO J.">
        <title>Identification of eukaryotic peptide deformylases reveals universality of N-terminal protein processing mechanisms.</title>
        <authorList>
            <person name="Giglione C."/>
            <person name="Serero A."/>
            <person name="Pierre M."/>
            <person name="Boisson B."/>
            <person name="Meinnel T."/>
        </authorList>
    </citation>
    <scope>NUCLEOTIDE SEQUENCE [MRNA]</scope>
    <scope>TISSUE SPECIFICITY</scope>
    <scope>SUBCELLULAR LOCATION</scope>
</reference>
<reference key="2">
    <citation type="journal article" date="2000" name="Nature">
        <title>Sequence and analysis of chromosome 1 of the plant Arabidopsis thaliana.</title>
        <authorList>
            <person name="Theologis A."/>
            <person name="Ecker J.R."/>
            <person name="Palm C.J."/>
            <person name="Federspiel N.A."/>
            <person name="Kaul S."/>
            <person name="White O."/>
            <person name="Alonso J."/>
            <person name="Altafi H."/>
            <person name="Araujo R."/>
            <person name="Bowman C.L."/>
            <person name="Brooks S.Y."/>
            <person name="Buehler E."/>
            <person name="Chan A."/>
            <person name="Chao Q."/>
            <person name="Chen H."/>
            <person name="Cheuk R.F."/>
            <person name="Chin C.W."/>
            <person name="Chung M.K."/>
            <person name="Conn L."/>
            <person name="Conway A.B."/>
            <person name="Conway A.R."/>
            <person name="Creasy T.H."/>
            <person name="Dewar K."/>
            <person name="Dunn P."/>
            <person name="Etgu P."/>
            <person name="Feldblyum T.V."/>
            <person name="Feng J.-D."/>
            <person name="Fong B."/>
            <person name="Fujii C.Y."/>
            <person name="Gill J.E."/>
            <person name="Goldsmith A.D."/>
            <person name="Haas B."/>
            <person name="Hansen N.F."/>
            <person name="Hughes B."/>
            <person name="Huizar L."/>
            <person name="Hunter J.L."/>
            <person name="Jenkins J."/>
            <person name="Johnson-Hopson C."/>
            <person name="Khan S."/>
            <person name="Khaykin E."/>
            <person name="Kim C.J."/>
            <person name="Koo H.L."/>
            <person name="Kremenetskaia I."/>
            <person name="Kurtz D.B."/>
            <person name="Kwan A."/>
            <person name="Lam B."/>
            <person name="Langin-Hooper S."/>
            <person name="Lee A."/>
            <person name="Lee J.M."/>
            <person name="Lenz C.A."/>
            <person name="Li J.H."/>
            <person name="Li Y.-P."/>
            <person name="Lin X."/>
            <person name="Liu S.X."/>
            <person name="Liu Z.A."/>
            <person name="Luros J.S."/>
            <person name="Maiti R."/>
            <person name="Marziali A."/>
            <person name="Militscher J."/>
            <person name="Miranda M."/>
            <person name="Nguyen M."/>
            <person name="Nierman W.C."/>
            <person name="Osborne B.I."/>
            <person name="Pai G."/>
            <person name="Peterson J."/>
            <person name="Pham P.K."/>
            <person name="Rizzo M."/>
            <person name="Rooney T."/>
            <person name="Rowley D."/>
            <person name="Sakano H."/>
            <person name="Salzberg S.L."/>
            <person name="Schwartz J.R."/>
            <person name="Shinn P."/>
            <person name="Southwick A.M."/>
            <person name="Sun H."/>
            <person name="Tallon L.J."/>
            <person name="Tambunga G."/>
            <person name="Toriumi M.J."/>
            <person name="Town C.D."/>
            <person name="Utterback T."/>
            <person name="Van Aken S."/>
            <person name="Vaysberg M."/>
            <person name="Vysotskaia V.S."/>
            <person name="Walker M."/>
            <person name="Wu D."/>
            <person name="Yu G."/>
            <person name="Fraser C.M."/>
            <person name="Venter J.C."/>
            <person name="Davis R.W."/>
        </authorList>
    </citation>
    <scope>NUCLEOTIDE SEQUENCE [LARGE SCALE GENOMIC DNA]</scope>
    <source>
        <strain>cv. Columbia</strain>
    </source>
</reference>
<reference key="3">
    <citation type="journal article" date="2017" name="Plant J.">
        <title>Araport11: a complete reannotation of the Arabidopsis thaliana reference genome.</title>
        <authorList>
            <person name="Cheng C.Y."/>
            <person name="Krishnakumar V."/>
            <person name="Chan A.P."/>
            <person name="Thibaud-Nissen F."/>
            <person name="Schobel S."/>
            <person name="Town C.D."/>
        </authorList>
    </citation>
    <scope>GENOME REANNOTATION</scope>
    <source>
        <strain>cv. Columbia</strain>
    </source>
</reference>
<reference key="4">
    <citation type="journal article" date="2003" name="Science">
        <title>Empirical analysis of transcriptional activity in the Arabidopsis genome.</title>
        <authorList>
            <person name="Yamada K."/>
            <person name="Lim J."/>
            <person name="Dale J.M."/>
            <person name="Chen H."/>
            <person name="Shinn P."/>
            <person name="Palm C.J."/>
            <person name="Southwick A.M."/>
            <person name="Wu H.C."/>
            <person name="Kim C.J."/>
            <person name="Nguyen M."/>
            <person name="Pham P.K."/>
            <person name="Cheuk R.F."/>
            <person name="Karlin-Newmann G."/>
            <person name="Liu S.X."/>
            <person name="Lam B."/>
            <person name="Sakano H."/>
            <person name="Wu T."/>
            <person name="Yu G."/>
            <person name="Miranda M."/>
            <person name="Quach H.L."/>
            <person name="Tripp M."/>
            <person name="Chang C.H."/>
            <person name="Lee J.M."/>
            <person name="Toriumi M.J."/>
            <person name="Chan M.M."/>
            <person name="Tang C.C."/>
            <person name="Onodera C.S."/>
            <person name="Deng J.M."/>
            <person name="Akiyama K."/>
            <person name="Ansari Y."/>
            <person name="Arakawa T."/>
            <person name="Banh J."/>
            <person name="Banno F."/>
            <person name="Bowser L."/>
            <person name="Brooks S.Y."/>
            <person name="Carninci P."/>
            <person name="Chao Q."/>
            <person name="Choy N."/>
            <person name="Enju A."/>
            <person name="Goldsmith A.D."/>
            <person name="Gurjal M."/>
            <person name="Hansen N.F."/>
            <person name="Hayashizaki Y."/>
            <person name="Johnson-Hopson C."/>
            <person name="Hsuan V.W."/>
            <person name="Iida K."/>
            <person name="Karnes M."/>
            <person name="Khan S."/>
            <person name="Koesema E."/>
            <person name="Ishida J."/>
            <person name="Jiang P.X."/>
            <person name="Jones T."/>
            <person name="Kawai J."/>
            <person name="Kamiya A."/>
            <person name="Meyers C."/>
            <person name="Nakajima M."/>
            <person name="Narusaka M."/>
            <person name="Seki M."/>
            <person name="Sakurai T."/>
            <person name="Satou M."/>
            <person name="Tamse R."/>
            <person name="Vaysberg M."/>
            <person name="Wallender E.K."/>
            <person name="Wong C."/>
            <person name="Yamamura Y."/>
            <person name="Yuan S."/>
            <person name="Shinozaki K."/>
            <person name="Davis R.W."/>
            <person name="Theologis A."/>
            <person name="Ecker J.R."/>
        </authorList>
    </citation>
    <scope>NUCLEOTIDE SEQUENCE [LARGE SCALE MRNA]</scope>
    <source>
        <strain>cv. Columbia</strain>
    </source>
</reference>
<keyword id="KW-0025">Alternative splicing</keyword>
<keyword id="KW-0031">Aminopeptidase</keyword>
<keyword id="KW-0150">Chloroplast</keyword>
<keyword id="KW-0378">Hydrolase</keyword>
<keyword id="KW-0479">Metal-binding</keyword>
<keyword id="KW-0934">Plastid</keyword>
<keyword id="KW-0645">Protease</keyword>
<keyword id="KW-1185">Reference proteome</keyword>
<keyword id="KW-0809">Transit peptide</keyword>
<gene>
    <name type="primary">MAP1B</name>
    <name type="ordered locus">At1g13270</name>
    <name type="ORF">T6J4.3</name>
</gene>
<sequence length="369" mass="40424">MASSVFLSSFSSSSSLQLCSSFHGEYLAPSRCFLGAPVTSSSLSLSGKKNSYSPRQFHVSAKKVSGLEEAIRIRKMRELETKSKVRRNPPLRRGRVSPRLLVPDHIPRPPYVESGVLPDISSEFQIPGPEGIAKMRAACELAARVLNYAGTLVKPSVTTNEIDKAVHDMIIEAGAYPSPLGYGGFPKSVCTSVNECMCHGIPDSRQLQSGDIINIDVTVYLDGYHGDTSRTFFCGEVDEGFKRLVKVTEECLERGIAVCKDGASFKKIGKRISEHAEKFGYNVVERFVGHGVGPVFHSEPLIYHYRNDEPGLMVEGQTFTIEPILTIGTTECVTWPDNWTTLTADGGVAAQFEHTILITRTGSEILTKC</sequence>
<comment type="function">
    <text evidence="1">Removes the N-terminal methionine from nascent proteins. The N-terminal methionine is often cleaved when the second residue in the primary sequence is small and uncharged (Met-Ala-, Cys, Gly, Pro, Ser, Thr, or Val).</text>
</comment>
<comment type="catalytic activity">
    <reaction evidence="1">
        <text>Release of N-terminal amino acids, preferentially methionine, from peptides and arylamides.</text>
        <dbReference type="EC" id="3.4.11.18"/>
    </reaction>
</comment>
<comment type="cofactor">
    <cofactor evidence="1">
        <name>Co(2+)</name>
        <dbReference type="ChEBI" id="CHEBI:48828"/>
    </cofactor>
    <cofactor evidence="1">
        <name>Zn(2+)</name>
        <dbReference type="ChEBI" id="CHEBI:29105"/>
    </cofactor>
    <cofactor evidence="1">
        <name>Mn(2+)</name>
        <dbReference type="ChEBI" id="CHEBI:29035"/>
    </cofactor>
    <cofactor evidence="1">
        <name>Fe(2+)</name>
        <dbReference type="ChEBI" id="CHEBI:29033"/>
    </cofactor>
    <text evidence="1">Binds 2 divalent metal cations per subunit. Has a high-affinity and a low affinity metal-binding site. The true nature of the physiological cofactor is under debate. The enzyme is active with cobalt, zinc, manganese or divalent iron ions. Most likely, methionine aminopeptidases function as mononuclear Fe(2+)-metalloproteases under physiological conditions, and the catalytically relevant metal-binding site has been assigned to the histidine-containing high-affinity site.</text>
</comment>
<comment type="subcellular location">
    <subcellularLocation>
        <location evidence="1 2">Plastid</location>
        <location evidence="1 2">Chloroplast</location>
    </subcellularLocation>
</comment>
<comment type="alternative products">
    <event type="alternative splicing"/>
    <isoform>
        <id>Q9FV52-1</id>
        <name>1</name>
        <sequence type="displayed"/>
    </isoform>
    <text>A number of isoforms are produced. According to EST sequences.</text>
</comment>
<comment type="tissue specificity">
    <text evidence="2">Ubiquitous. Preferentially expressed in green tissues.</text>
</comment>
<comment type="similarity">
    <text evidence="1">Belongs to the peptidase M24A family. Methionine aminopeptidase type 1 subfamily.</text>
</comment>
<protein>
    <recommendedName>
        <fullName evidence="1">Methionine aminopeptidase 1B, chloroplastic</fullName>
        <shortName evidence="1">MAP 1B</shortName>
        <shortName evidence="1">MetAP 1B</shortName>
        <ecNumber evidence="1">3.4.11.18</ecNumber>
    </recommendedName>
    <alternativeName>
        <fullName evidence="1">Peptidase M 1B</fullName>
    </alternativeName>
</protein>
<feature type="transit peptide" description="Chloroplast" evidence="3">
    <location>
        <begin position="1"/>
        <end position="61"/>
    </location>
</feature>
<feature type="chain" id="PRO_0000045805" description="Methionine aminopeptidase 1B, chloroplastic">
    <location>
        <begin position="62"/>
        <end position="369"/>
    </location>
</feature>
<feature type="binding site" evidence="1">
    <location>
        <position position="199"/>
    </location>
    <ligand>
        <name>substrate</name>
    </ligand>
</feature>
<feature type="binding site" evidence="1">
    <location>
        <position position="216"/>
    </location>
    <ligand>
        <name>a divalent metal cation</name>
        <dbReference type="ChEBI" id="CHEBI:60240"/>
        <label>1</label>
    </ligand>
</feature>
<feature type="binding site" evidence="1">
    <location>
        <position position="227"/>
    </location>
    <ligand>
        <name>a divalent metal cation</name>
        <dbReference type="ChEBI" id="CHEBI:60240"/>
        <label>1</label>
    </ligand>
</feature>
<feature type="binding site" evidence="1">
    <location>
        <position position="227"/>
    </location>
    <ligand>
        <name>a divalent metal cation</name>
        <dbReference type="ChEBI" id="CHEBI:60240"/>
        <label>2</label>
        <note>catalytic</note>
    </ligand>
</feature>
<feature type="binding site" evidence="1">
    <location>
        <position position="290"/>
    </location>
    <ligand>
        <name>a divalent metal cation</name>
        <dbReference type="ChEBI" id="CHEBI:60240"/>
        <label>2</label>
        <note>catalytic</note>
    </ligand>
</feature>
<feature type="binding site" evidence="1">
    <location>
        <position position="297"/>
    </location>
    <ligand>
        <name>substrate</name>
    </ligand>
</feature>
<feature type="binding site" evidence="1">
    <location>
        <position position="322"/>
    </location>
    <ligand>
        <name>a divalent metal cation</name>
        <dbReference type="ChEBI" id="CHEBI:60240"/>
        <label>2</label>
        <note>catalytic</note>
    </ligand>
</feature>
<feature type="binding site" evidence="1">
    <location>
        <position position="353"/>
    </location>
    <ligand>
        <name>a divalent metal cation</name>
        <dbReference type="ChEBI" id="CHEBI:60240"/>
        <label>1</label>
    </ligand>
</feature>
<feature type="binding site" evidence="1">
    <location>
        <position position="353"/>
    </location>
    <ligand>
        <name>a divalent metal cation</name>
        <dbReference type="ChEBI" id="CHEBI:60240"/>
        <label>2</label>
        <note>catalytic</note>
    </ligand>
</feature>
<feature type="sequence conflict" description="In Ref. 1; AAG33975." evidence="3" ref="1">
    <original>L</original>
    <variation>I</variation>
    <location>
        <position position="34"/>
    </location>
</feature>
<feature type="sequence conflict" description="In Ref. 1; AAG33975." evidence="3" ref="1">
    <original>R</original>
    <variation>Q</variation>
    <location>
        <position position="243"/>
    </location>
</feature>
<feature type="sequence conflict" description="In Ref. 1; AAG33975." evidence="3" ref="1">
    <original>R</original>
    <variation>K</variation>
    <location>
        <position position="254"/>
    </location>
</feature>
<dbReference type="EC" id="3.4.11.18" evidence="1"/>
<dbReference type="EMBL" id="AF250961">
    <property type="protein sequence ID" value="AAG33975.1"/>
    <property type="molecule type" value="mRNA"/>
</dbReference>
<dbReference type="EMBL" id="AC011810">
    <property type="protein sequence ID" value="AAG09564.1"/>
    <property type="molecule type" value="Genomic_DNA"/>
</dbReference>
<dbReference type="EMBL" id="CP002684">
    <property type="protein sequence ID" value="AEE28993.1"/>
    <property type="molecule type" value="Genomic_DNA"/>
</dbReference>
<dbReference type="EMBL" id="BT000449">
    <property type="protein sequence ID" value="AAN17426.1"/>
    <property type="molecule type" value="mRNA"/>
</dbReference>
<dbReference type="EMBL" id="BT001213">
    <property type="protein sequence ID" value="AAN65100.1"/>
    <property type="molecule type" value="mRNA"/>
</dbReference>
<dbReference type="PIR" id="C86267">
    <property type="entry name" value="C86267"/>
</dbReference>
<dbReference type="RefSeq" id="NP_172785.1">
    <molecule id="Q9FV52-1"/>
    <property type="nucleotide sequence ID" value="NM_101198.4"/>
</dbReference>
<dbReference type="SMR" id="Q9FV52"/>
<dbReference type="BioGRID" id="23127">
    <property type="interactions" value="2"/>
</dbReference>
<dbReference type="FunCoup" id="Q9FV52">
    <property type="interactions" value="1071"/>
</dbReference>
<dbReference type="IntAct" id="Q9FV52">
    <property type="interactions" value="1"/>
</dbReference>
<dbReference type="STRING" id="3702.Q9FV52"/>
<dbReference type="MEROPS" id="M24.A05"/>
<dbReference type="PaxDb" id="3702-AT1G13270.1"/>
<dbReference type="ProteomicsDB" id="238281">
    <molecule id="Q9FV52-1"/>
</dbReference>
<dbReference type="EnsemblPlants" id="AT1G13270.1">
    <molecule id="Q9FV52-1"/>
    <property type="protein sequence ID" value="AT1G13270.1"/>
    <property type="gene ID" value="AT1G13270"/>
</dbReference>
<dbReference type="GeneID" id="837887"/>
<dbReference type="Gramene" id="AT1G13270.1">
    <molecule id="Q9FV52-1"/>
    <property type="protein sequence ID" value="AT1G13270.1"/>
    <property type="gene ID" value="AT1G13270"/>
</dbReference>
<dbReference type="KEGG" id="ath:AT1G13270"/>
<dbReference type="Araport" id="AT1G13270"/>
<dbReference type="TAIR" id="AT1G13270">
    <property type="gene designation" value="MAP1C"/>
</dbReference>
<dbReference type="eggNOG" id="KOG2738">
    <property type="taxonomic scope" value="Eukaryota"/>
</dbReference>
<dbReference type="HOGENOM" id="CLU_015857_1_5_1"/>
<dbReference type="InParanoid" id="Q9FV52"/>
<dbReference type="OMA" id="NIECITW"/>
<dbReference type="PhylomeDB" id="Q9FV52"/>
<dbReference type="PRO" id="PR:Q9FV52"/>
<dbReference type="Proteomes" id="UP000006548">
    <property type="component" value="Chromosome 1"/>
</dbReference>
<dbReference type="ExpressionAtlas" id="Q9FV52">
    <property type="expression patterns" value="baseline and differential"/>
</dbReference>
<dbReference type="GO" id="GO:0009507">
    <property type="term" value="C:chloroplast"/>
    <property type="evidence" value="ECO:0007005"/>
    <property type="project" value="TAIR"/>
</dbReference>
<dbReference type="GO" id="GO:0005576">
    <property type="term" value="C:extracellular region"/>
    <property type="evidence" value="ECO:0007005"/>
    <property type="project" value="TAIR"/>
</dbReference>
<dbReference type="GO" id="GO:0005739">
    <property type="term" value="C:mitochondrion"/>
    <property type="evidence" value="ECO:0000304"/>
    <property type="project" value="TAIR"/>
</dbReference>
<dbReference type="GO" id="GO:0004239">
    <property type="term" value="F:initiator methionyl aminopeptidase activity"/>
    <property type="evidence" value="ECO:0007669"/>
    <property type="project" value="UniProtKB-UniRule"/>
</dbReference>
<dbReference type="GO" id="GO:0046872">
    <property type="term" value="F:metal ion binding"/>
    <property type="evidence" value="ECO:0007669"/>
    <property type="project" value="UniProtKB-UniRule"/>
</dbReference>
<dbReference type="GO" id="GO:0070006">
    <property type="term" value="F:metalloaminopeptidase activity"/>
    <property type="evidence" value="ECO:0007669"/>
    <property type="project" value="UniProtKB-UniRule"/>
</dbReference>
<dbReference type="GO" id="GO:0003729">
    <property type="term" value="F:mRNA binding"/>
    <property type="evidence" value="ECO:0000314"/>
    <property type="project" value="TAIR"/>
</dbReference>
<dbReference type="GO" id="GO:0031365">
    <property type="term" value="P:N-terminal protein amino acid modification"/>
    <property type="evidence" value="ECO:0000304"/>
    <property type="project" value="TAIR"/>
</dbReference>
<dbReference type="GO" id="GO:0006508">
    <property type="term" value="P:proteolysis"/>
    <property type="evidence" value="ECO:0007669"/>
    <property type="project" value="UniProtKB-KW"/>
</dbReference>
<dbReference type="CDD" id="cd01086">
    <property type="entry name" value="MetAP1"/>
    <property type="match status" value="1"/>
</dbReference>
<dbReference type="FunFam" id="3.90.230.10:FF:000011">
    <property type="entry name" value="Methionine aminopeptidase"/>
    <property type="match status" value="1"/>
</dbReference>
<dbReference type="Gene3D" id="3.90.230.10">
    <property type="entry name" value="Creatinase/methionine aminopeptidase superfamily"/>
    <property type="match status" value="1"/>
</dbReference>
<dbReference type="HAMAP" id="MF_01974">
    <property type="entry name" value="MetAP_1"/>
    <property type="match status" value="1"/>
</dbReference>
<dbReference type="InterPro" id="IPR036005">
    <property type="entry name" value="Creatinase/aminopeptidase-like"/>
</dbReference>
<dbReference type="InterPro" id="IPR000994">
    <property type="entry name" value="Pept_M24"/>
</dbReference>
<dbReference type="InterPro" id="IPR001714">
    <property type="entry name" value="Pept_M24_MAP"/>
</dbReference>
<dbReference type="InterPro" id="IPR002467">
    <property type="entry name" value="Pept_M24A_MAP1"/>
</dbReference>
<dbReference type="NCBIfam" id="TIGR00500">
    <property type="entry name" value="met_pdase_I"/>
    <property type="match status" value="1"/>
</dbReference>
<dbReference type="PANTHER" id="PTHR43330">
    <property type="entry name" value="METHIONINE AMINOPEPTIDASE"/>
    <property type="match status" value="1"/>
</dbReference>
<dbReference type="PANTHER" id="PTHR43330:SF1">
    <property type="entry name" value="METHIONINE AMINOPEPTIDASE 1B, CHLOROPLASTIC"/>
    <property type="match status" value="1"/>
</dbReference>
<dbReference type="Pfam" id="PF00557">
    <property type="entry name" value="Peptidase_M24"/>
    <property type="match status" value="1"/>
</dbReference>
<dbReference type="PRINTS" id="PR00599">
    <property type="entry name" value="MAPEPTIDASE"/>
</dbReference>
<dbReference type="SUPFAM" id="SSF55920">
    <property type="entry name" value="Creatinase/aminopeptidase"/>
    <property type="match status" value="1"/>
</dbReference>
<dbReference type="PROSITE" id="PS00680">
    <property type="entry name" value="MAP_1"/>
    <property type="match status" value="1"/>
</dbReference>
<evidence type="ECO:0000255" key="1">
    <source>
        <dbReference type="HAMAP-Rule" id="MF_03174"/>
    </source>
</evidence>
<evidence type="ECO:0000269" key="2">
    <source>
    </source>
</evidence>
<evidence type="ECO:0000305" key="3"/>